<keyword id="KW-0997">Cell inner membrane</keyword>
<keyword id="KW-1003">Cell membrane</keyword>
<keyword id="KW-0472">Membrane</keyword>
<keyword id="KW-1185">Reference proteome</keyword>
<keyword id="KW-0762">Sugar transport</keyword>
<keyword id="KW-0812">Transmembrane</keyword>
<keyword id="KW-1133">Transmembrane helix</keyword>
<keyword id="KW-0813">Transport</keyword>
<protein>
    <recommendedName>
        <fullName>Xylose transport system permease protein XylH</fullName>
    </recommendedName>
</protein>
<feature type="chain" id="PRO_0000060236" description="Xylose transport system permease protein XylH">
    <location>
        <begin position="1"/>
        <end position="393"/>
    </location>
</feature>
<feature type="topological domain" description="Periplasmic" evidence="2">
    <location>
        <begin position="1"/>
        <end position="24"/>
    </location>
</feature>
<feature type="transmembrane region" description="Helical" evidence="2">
    <location>
        <begin position="25"/>
        <end position="45"/>
    </location>
</feature>
<feature type="topological domain" description="Cytoplasmic" evidence="2">
    <location>
        <begin position="46"/>
        <end position="64"/>
    </location>
</feature>
<feature type="transmembrane region" description="Helical" evidence="2">
    <location>
        <begin position="65"/>
        <end position="85"/>
    </location>
</feature>
<feature type="topological domain" description="Periplasmic" evidence="2">
    <location>
        <begin position="86"/>
        <end position="102"/>
    </location>
</feature>
<feature type="transmembrane region" description="Helical" evidence="2">
    <location>
        <begin position="103"/>
        <end position="123"/>
    </location>
</feature>
<feature type="topological domain" description="Cytoplasmic" evidence="2">
    <location>
        <begin position="124"/>
        <end position="135"/>
    </location>
</feature>
<feature type="transmembrane region" description="Helical" evidence="2">
    <location>
        <begin position="136"/>
        <end position="156"/>
    </location>
</feature>
<feature type="topological domain" description="Periplasmic" evidence="2">
    <location>
        <begin position="157"/>
        <end position="175"/>
    </location>
</feature>
<feature type="transmembrane region" description="Helical" evidence="2">
    <location>
        <begin position="176"/>
        <end position="196"/>
    </location>
</feature>
<feature type="topological domain" description="Cytoplasmic" evidence="2">
    <location>
        <begin position="197"/>
        <end position="214"/>
    </location>
</feature>
<feature type="transmembrane region" description="Helical" evidence="2">
    <location>
        <begin position="215"/>
        <end position="235"/>
    </location>
</feature>
<feature type="topological domain" description="Periplasmic" evidence="2">
    <location>
        <begin position="236"/>
        <end position="239"/>
    </location>
</feature>
<feature type="transmembrane region" description="Helical" evidence="2">
    <location>
        <begin position="240"/>
        <end position="260"/>
    </location>
</feature>
<feature type="topological domain" description="Cytoplasmic" evidence="2">
    <location>
        <begin position="261"/>
        <end position="287"/>
    </location>
</feature>
<feature type="transmembrane region" description="Helical" evidence="2">
    <location>
        <begin position="288"/>
        <end position="308"/>
    </location>
</feature>
<feature type="topological domain" description="Periplasmic" evidence="2">
    <location>
        <begin position="309"/>
        <end position="312"/>
    </location>
</feature>
<feature type="transmembrane region" description="Helical" evidence="2">
    <location>
        <begin position="313"/>
        <end position="333"/>
    </location>
</feature>
<feature type="topological domain" description="Cytoplasmic" evidence="2">
    <location>
        <begin position="334"/>
        <end position="336"/>
    </location>
</feature>
<feature type="transmembrane region" description="Helical" evidence="2">
    <location>
        <begin position="337"/>
        <end position="357"/>
    </location>
</feature>
<feature type="topological domain" description="Periplasmic" evidence="2">
    <location>
        <begin position="358"/>
        <end position="365"/>
    </location>
</feature>
<feature type="transmembrane region" description="Helical" evidence="2">
    <location>
        <begin position="366"/>
        <end position="386"/>
    </location>
</feature>
<feature type="topological domain" description="Cytoplasmic" evidence="2">
    <location>
        <begin position="387"/>
        <end position="393"/>
    </location>
</feature>
<name>XYLH_ECOL6</name>
<proteinExistence type="inferred from homology"/>
<evidence type="ECO:0000250" key="1"/>
<evidence type="ECO:0000255" key="2"/>
<evidence type="ECO:0000305" key="3"/>
<reference key="1">
    <citation type="journal article" date="2002" name="Proc. Natl. Acad. Sci. U.S.A.">
        <title>Extensive mosaic structure revealed by the complete genome sequence of uropathogenic Escherichia coli.</title>
        <authorList>
            <person name="Welch R.A."/>
            <person name="Burland V."/>
            <person name="Plunkett G. III"/>
            <person name="Redford P."/>
            <person name="Roesch P."/>
            <person name="Rasko D."/>
            <person name="Buckles E.L."/>
            <person name="Liou S.-R."/>
            <person name="Boutin A."/>
            <person name="Hackett J."/>
            <person name="Stroud D."/>
            <person name="Mayhew G.F."/>
            <person name="Rose D.J."/>
            <person name="Zhou S."/>
            <person name="Schwartz D.C."/>
            <person name="Perna N.T."/>
            <person name="Mobley H.L.T."/>
            <person name="Donnenberg M.S."/>
            <person name="Blattner F.R."/>
        </authorList>
    </citation>
    <scope>NUCLEOTIDE SEQUENCE [LARGE SCALE GENOMIC DNA]</scope>
    <source>
        <strain>CFT073 / ATCC 700928 / UPEC</strain>
    </source>
</reference>
<dbReference type="EMBL" id="AE014075">
    <property type="protein sequence ID" value="AAN82824.1"/>
    <property type="molecule type" value="Genomic_DNA"/>
</dbReference>
<dbReference type="RefSeq" id="WP_000045978.1">
    <property type="nucleotide sequence ID" value="NZ_CP051263.1"/>
</dbReference>
<dbReference type="STRING" id="199310.c4388"/>
<dbReference type="KEGG" id="ecc:c4388"/>
<dbReference type="eggNOG" id="COG4214">
    <property type="taxonomic scope" value="Bacteria"/>
</dbReference>
<dbReference type="HOGENOM" id="CLU_028880_2_0_6"/>
<dbReference type="BioCyc" id="ECOL199310:C4388-MONOMER"/>
<dbReference type="Proteomes" id="UP000001410">
    <property type="component" value="Chromosome"/>
</dbReference>
<dbReference type="GO" id="GO:0005886">
    <property type="term" value="C:plasma membrane"/>
    <property type="evidence" value="ECO:0007669"/>
    <property type="project" value="UniProtKB-SubCell"/>
</dbReference>
<dbReference type="GO" id="GO:0022857">
    <property type="term" value="F:transmembrane transporter activity"/>
    <property type="evidence" value="ECO:0007669"/>
    <property type="project" value="InterPro"/>
</dbReference>
<dbReference type="CDD" id="cd06579">
    <property type="entry name" value="TM_PBP1_transp_AraH_like"/>
    <property type="match status" value="1"/>
</dbReference>
<dbReference type="InterPro" id="IPR001851">
    <property type="entry name" value="ABC_transp_permease"/>
</dbReference>
<dbReference type="PANTHER" id="PTHR32196">
    <property type="entry name" value="ABC TRANSPORTER PERMEASE PROTEIN YPHD-RELATED-RELATED"/>
    <property type="match status" value="1"/>
</dbReference>
<dbReference type="PANTHER" id="PTHR32196:SF32">
    <property type="entry name" value="XYLOSE TRANSPORT SYSTEM PERMEASE PROTEIN XYLH"/>
    <property type="match status" value="1"/>
</dbReference>
<dbReference type="Pfam" id="PF02653">
    <property type="entry name" value="BPD_transp_2"/>
    <property type="match status" value="1"/>
</dbReference>
<sequence>MSKSNPSEVKLAVPTSGGFSGLKSLNLQVFVMIAAIIAIMLFFTWTTDGAYLSARNVSNLLRQTAITGILAVGMVFVIISAEIDLSVGSMMGLLGGVAAICDVWLGWPLPLTIIVTLVLGLLLGAWNGWWVAYRKVPSFIVTLAGMLAFRGILIGITNGTTVSPTSAAMSQIGQSYLPASTGFIIGALGLMAFVGWQWRGRMRRQALGLQSPASTAVVGRQALTAIIVLGAIWLLNDYRGVPTPVLLLTLLLLGGMFMATRTAFGRRIYAIGGNLEAARLSGINVERTKLAVFAINGLMVAIAGLILSSRLGAGSPSAGNIAELDAIAACVIGGTSLAGGVGSVAGAVMGAFIMASLDNGMSMMDVPTFWQYIVKGAILLLAVWMDSATKRRS</sequence>
<comment type="function">
    <text evidence="1">Part of the binding-protein-dependent transport system for D-xylose. Probably responsible for the translocation of the substrate across the membrane (By similarity).</text>
</comment>
<comment type="subcellular location">
    <subcellularLocation>
        <location evidence="1">Cell inner membrane</location>
        <topology evidence="1">Multi-pass membrane protein</topology>
    </subcellularLocation>
</comment>
<comment type="similarity">
    <text evidence="3">Belongs to the binding-protein-dependent transport system permease family. AraH/RbsC subfamily.</text>
</comment>
<gene>
    <name type="primary">xylH</name>
    <name type="ordered locus">c4388</name>
</gene>
<accession>P0AGI5</accession>
<accession>P37389</accession>
<organism>
    <name type="scientific">Escherichia coli O6:H1 (strain CFT073 / ATCC 700928 / UPEC)</name>
    <dbReference type="NCBI Taxonomy" id="199310"/>
    <lineage>
        <taxon>Bacteria</taxon>
        <taxon>Pseudomonadati</taxon>
        <taxon>Pseudomonadota</taxon>
        <taxon>Gammaproteobacteria</taxon>
        <taxon>Enterobacterales</taxon>
        <taxon>Enterobacteriaceae</taxon>
        <taxon>Escherichia</taxon>
    </lineage>
</organism>